<sequence length="470" mass="52014">MIKPRTPPGIMELLPREQIAFQRMLDVIRRNYERFGFLPIETPVFELSDVLLTKSGGETERQVYFVQSTGALANAAAAADEGAENGGLPELALRFDLTVPLARYVAEHEHDLSFPFRRYQMQRVYRGERAQRGRFREFYQCDIDVIGKDALSIRYDAEVLAVIHAVFAELGIGDFKVQLNNRKLLRGFFESLGVAEGELQLAVLREVDKIDKRGADYVRDTLVGEGFGIAAEQVARILAFVAVRSEGHADALAQLQALEASVGASATLGEGIAELREVLELVKALGVPERAYCLNFSIARGLDYYTGTVYETTLTDHPQIGSICSGGRYESLASHYTKSRLPGVGISIGLTRLFWQLREAGLIQGIAESSVQAMVALMDETRLDDVLDIARRLRIAGINTEVQMEPKKVGKQFQYAARAGIRFVVLAGDDELARGVVAVKDLVREQQFDVARDELASTLLVELEQAKAMP</sequence>
<protein>
    <recommendedName>
        <fullName evidence="1">Histidine--tRNA ligase</fullName>
        <ecNumber evidence="1">6.1.1.21</ecNumber>
    </recommendedName>
    <alternativeName>
        <fullName evidence="1">Histidyl-tRNA synthetase</fullName>
        <shortName evidence="1">HisRS</shortName>
    </alternativeName>
</protein>
<proteinExistence type="inferred from homology"/>
<comment type="catalytic activity">
    <reaction evidence="1">
        <text>tRNA(His) + L-histidine + ATP = L-histidyl-tRNA(His) + AMP + diphosphate + H(+)</text>
        <dbReference type="Rhea" id="RHEA:17313"/>
        <dbReference type="Rhea" id="RHEA-COMP:9665"/>
        <dbReference type="Rhea" id="RHEA-COMP:9689"/>
        <dbReference type="ChEBI" id="CHEBI:15378"/>
        <dbReference type="ChEBI" id="CHEBI:30616"/>
        <dbReference type="ChEBI" id="CHEBI:33019"/>
        <dbReference type="ChEBI" id="CHEBI:57595"/>
        <dbReference type="ChEBI" id="CHEBI:78442"/>
        <dbReference type="ChEBI" id="CHEBI:78527"/>
        <dbReference type="ChEBI" id="CHEBI:456215"/>
        <dbReference type="EC" id="6.1.1.21"/>
    </reaction>
</comment>
<comment type="subunit">
    <text evidence="1">Homodimer.</text>
</comment>
<comment type="subcellular location">
    <subcellularLocation>
        <location evidence="1">Cytoplasm</location>
    </subcellularLocation>
</comment>
<comment type="similarity">
    <text evidence="1">Belongs to the class-II aminoacyl-tRNA synthetase family.</text>
</comment>
<comment type="sequence caution" evidence="2">
    <conflict type="erroneous initiation">
        <sequence resource="EMBL-CDS" id="AAW75505"/>
    </conflict>
</comment>
<keyword id="KW-0030">Aminoacyl-tRNA synthetase</keyword>
<keyword id="KW-0067">ATP-binding</keyword>
<keyword id="KW-0963">Cytoplasm</keyword>
<keyword id="KW-0436">Ligase</keyword>
<keyword id="KW-0547">Nucleotide-binding</keyword>
<keyword id="KW-0648">Protein biosynthesis</keyword>
<keyword id="KW-1185">Reference proteome</keyword>
<feature type="chain" id="PRO_0000136302" description="Histidine--tRNA ligase">
    <location>
        <begin position="1"/>
        <end position="470"/>
    </location>
</feature>
<dbReference type="EC" id="6.1.1.21" evidence="1"/>
<dbReference type="EMBL" id="AE013598">
    <property type="protein sequence ID" value="AAW75505.1"/>
    <property type="status" value="ALT_INIT"/>
    <property type="molecule type" value="Genomic_DNA"/>
</dbReference>
<dbReference type="SMR" id="Q5H0L6"/>
<dbReference type="STRING" id="291331.XOO2251"/>
<dbReference type="KEGG" id="xoo:XOO2251"/>
<dbReference type="HOGENOM" id="CLU_025113_3_0_6"/>
<dbReference type="Proteomes" id="UP000006735">
    <property type="component" value="Chromosome"/>
</dbReference>
<dbReference type="GO" id="GO:0005737">
    <property type="term" value="C:cytoplasm"/>
    <property type="evidence" value="ECO:0007669"/>
    <property type="project" value="UniProtKB-SubCell"/>
</dbReference>
<dbReference type="GO" id="GO:0005524">
    <property type="term" value="F:ATP binding"/>
    <property type="evidence" value="ECO:0007669"/>
    <property type="project" value="UniProtKB-UniRule"/>
</dbReference>
<dbReference type="GO" id="GO:0004821">
    <property type="term" value="F:histidine-tRNA ligase activity"/>
    <property type="evidence" value="ECO:0007669"/>
    <property type="project" value="UniProtKB-UniRule"/>
</dbReference>
<dbReference type="GO" id="GO:0006427">
    <property type="term" value="P:histidyl-tRNA aminoacylation"/>
    <property type="evidence" value="ECO:0007669"/>
    <property type="project" value="UniProtKB-UniRule"/>
</dbReference>
<dbReference type="CDD" id="cd00773">
    <property type="entry name" value="HisRS-like_core"/>
    <property type="match status" value="1"/>
</dbReference>
<dbReference type="CDD" id="cd00859">
    <property type="entry name" value="HisRS_anticodon"/>
    <property type="match status" value="1"/>
</dbReference>
<dbReference type="FunFam" id="3.30.930.10:FF:000129">
    <property type="entry name" value="Histidine--tRNA ligase"/>
    <property type="match status" value="1"/>
</dbReference>
<dbReference type="FunFam" id="3.40.50.800:FF:000027">
    <property type="entry name" value="Histidine--tRNA ligase"/>
    <property type="match status" value="1"/>
</dbReference>
<dbReference type="Gene3D" id="3.40.50.800">
    <property type="entry name" value="Anticodon-binding domain"/>
    <property type="match status" value="1"/>
</dbReference>
<dbReference type="Gene3D" id="3.30.930.10">
    <property type="entry name" value="Bira Bifunctional Protein, Domain 2"/>
    <property type="match status" value="1"/>
</dbReference>
<dbReference type="HAMAP" id="MF_00127">
    <property type="entry name" value="His_tRNA_synth"/>
    <property type="match status" value="1"/>
</dbReference>
<dbReference type="InterPro" id="IPR006195">
    <property type="entry name" value="aa-tRNA-synth_II"/>
</dbReference>
<dbReference type="InterPro" id="IPR045864">
    <property type="entry name" value="aa-tRNA-synth_II/BPL/LPL"/>
</dbReference>
<dbReference type="InterPro" id="IPR004154">
    <property type="entry name" value="Anticodon-bd"/>
</dbReference>
<dbReference type="InterPro" id="IPR036621">
    <property type="entry name" value="Anticodon-bd_dom_sf"/>
</dbReference>
<dbReference type="InterPro" id="IPR015807">
    <property type="entry name" value="His-tRNA-ligase"/>
</dbReference>
<dbReference type="InterPro" id="IPR041715">
    <property type="entry name" value="HisRS-like_core"/>
</dbReference>
<dbReference type="InterPro" id="IPR004516">
    <property type="entry name" value="HisRS/HisZ"/>
</dbReference>
<dbReference type="InterPro" id="IPR033656">
    <property type="entry name" value="HisRS_anticodon"/>
</dbReference>
<dbReference type="NCBIfam" id="TIGR00442">
    <property type="entry name" value="hisS"/>
    <property type="match status" value="1"/>
</dbReference>
<dbReference type="PANTHER" id="PTHR11476:SF7">
    <property type="entry name" value="HISTIDINE--TRNA LIGASE"/>
    <property type="match status" value="1"/>
</dbReference>
<dbReference type="PANTHER" id="PTHR11476">
    <property type="entry name" value="HISTIDYL-TRNA SYNTHETASE"/>
    <property type="match status" value="1"/>
</dbReference>
<dbReference type="Pfam" id="PF03129">
    <property type="entry name" value="HGTP_anticodon"/>
    <property type="match status" value="1"/>
</dbReference>
<dbReference type="Pfam" id="PF13393">
    <property type="entry name" value="tRNA-synt_His"/>
    <property type="match status" value="1"/>
</dbReference>
<dbReference type="PIRSF" id="PIRSF001549">
    <property type="entry name" value="His-tRNA_synth"/>
    <property type="match status" value="1"/>
</dbReference>
<dbReference type="SUPFAM" id="SSF52954">
    <property type="entry name" value="Class II aaRS ABD-related"/>
    <property type="match status" value="1"/>
</dbReference>
<dbReference type="SUPFAM" id="SSF55681">
    <property type="entry name" value="Class II aaRS and biotin synthetases"/>
    <property type="match status" value="1"/>
</dbReference>
<dbReference type="PROSITE" id="PS50862">
    <property type="entry name" value="AA_TRNA_LIGASE_II"/>
    <property type="match status" value="1"/>
</dbReference>
<reference key="1">
    <citation type="journal article" date="2005" name="Nucleic Acids Res.">
        <title>The genome sequence of Xanthomonas oryzae pathovar oryzae KACC10331, the bacterial blight pathogen of rice.</title>
        <authorList>
            <person name="Lee B.-M."/>
            <person name="Park Y.-J."/>
            <person name="Park D.-S."/>
            <person name="Kang H.-W."/>
            <person name="Kim J.-G."/>
            <person name="Song E.-S."/>
            <person name="Park I.-C."/>
            <person name="Yoon U.-H."/>
            <person name="Hahn J.-H."/>
            <person name="Koo B.-S."/>
            <person name="Lee G.-B."/>
            <person name="Kim H."/>
            <person name="Park H.-S."/>
            <person name="Yoon K.-O."/>
            <person name="Kim J.-H."/>
            <person name="Jung C.-H."/>
            <person name="Koh N.-H."/>
            <person name="Seo J.-S."/>
            <person name="Go S.-J."/>
        </authorList>
    </citation>
    <scope>NUCLEOTIDE SEQUENCE [LARGE SCALE GENOMIC DNA]</scope>
    <source>
        <strain>KACC10331 / KXO85</strain>
    </source>
</reference>
<organism>
    <name type="scientific">Xanthomonas oryzae pv. oryzae (strain KACC10331 / KXO85)</name>
    <dbReference type="NCBI Taxonomy" id="291331"/>
    <lineage>
        <taxon>Bacteria</taxon>
        <taxon>Pseudomonadati</taxon>
        <taxon>Pseudomonadota</taxon>
        <taxon>Gammaproteobacteria</taxon>
        <taxon>Lysobacterales</taxon>
        <taxon>Lysobacteraceae</taxon>
        <taxon>Xanthomonas</taxon>
    </lineage>
</organism>
<name>SYH_XANOR</name>
<gene>
    <name evidence="1" type="primary">hisS</name>
    <name type="ordered locus">XOO2251</name>
</gene>
<accession>Q5H0L6</accession>
<evidence type="ECO:0000255" key="1">
    <source>
        <dbReference type="HAMAP-Rule" id="MF_00127"/>
    </source>
</evidence>
<evidence type="ECO:0000305" key="2"/>